<keyword id="KW-0378">Hydrolase</keyword>
<keyword id="KW-0460">Magnesium</keyword>
<keyword id="KW-0479">Metal-binding</keyword>
<keyword id="KW-0546">Nucleotide metabolism</keyword>
<keyword id="KW-0547">Nucleotide-binding</keyword>
<reference key="1">
    <citation type="journal article" date="2007" name="PLoS Genet.">
        <title>Patterns and implications of gene gain and loss in the evolution of Prochlorococcus.</title>
        <authorList>
            <person name="Kettler G.C."/>
            <person name="Martiny A.C."/>
            <person name="Huang K."/>
            <person name="Zucker J."/>
            <person name="Coleman M.L."/>
            <person name="Rodrigue S."/>
            <person name="Chen F."/>
            <person name="Lapidus A."/>
            <person name="Ferriera S."/>
            <person name="Johnson J."/>
            <person name="Steglich C."/>
            <person name="Church G.M."/>
            <person name="Richardson P."/>
            <person name="Chisholm S.W."/>
        </authorList>
    </citation>
    <scope>NUCLEOTIDE SEQUENCE [LARGE SCALE GENOMIC DNA]</scope>
    <source>
        <strain>NATL1A</strain>
    </source>
</reference>
<accession>A2C0B3</accession>
<evidence type="ECO:0000255" key="1">
    <source>
        <dbReference type="HAMAP-Rule" id="MF_01405"/>
    </source>
</evidence>
<name>IXTPA_PROM1</name>
<gene>
    <name type="ordered locus">NATL1_03591</name>
</gene>
<dbReference type="EC" id="3.6.1.66" evidence="1"/>
<dbReference type="EMBL" id="CP000553">
    <property type="protein sequence ID" value="ABM74923.1"/>
    <property type="molecule type" value="Genomic_DNA"/>
</dbReference>
<dbReference type="SMR" id="A2C0B3"/>
<dbReference type="KEGG" id="pme:NATL1_03591"/>
<dbReference type="eggNOG" id="COG0127">
    <property type="taxonomic scope" value="Bacteria"/>
</dbReference>
<dbReference type="HOGENOM" id="CLU_082080_0_2_3"/>
<dbReference type="Proteomes" id="UP000002592">
    <property type="component" value="Chromosome"/>
</dbReference>
<dbReference type="GO" id="GO:0005829">
    <property type="term" value="C:cytosol"/>
    <property type="evidence" value="ECO:0007669"/>
    <property type="project" value="TreeGrafter"/>
</dbReference>
<dbReference type="GO" id="GO:0035870">
    <property type="term" value="F:dITP diphosphatase activity"/>
    <property type="evidence" value="ECO:0007669"/>
    <property type="project" value="RHEA"/>
</dbReference>
<dbReference type="GO" id="GO:0036220">
    <property type="term" value="F:ITP diphosphatase activity"/>
    <property type="evidence" value="ECO:0007669"/>
    <property type="project" value="UniProtKB-EC"/>
</dbReference>
<dbReference type="GO" id="GO:0046872">
    <property type="term" value="F:metal ion binding"/>
    <property type="evidence" value="ECO:0007669"/>
    <property type="project" value="UniProtKB-KW"/>
</dbReference>
<dbReference type="GO" id="GO:0000166">
    <property type="term" value="F:nucleotide binding"/>
    <property type="evidence" value="ECO:0007669"/>
    <property type="project" value="UniProtKB-KW"/>
</dbReference>
<dbReference type="GO" id="GO:0017111">
    <property type="term" value="F:ribonucleoside triphosphate phosphatase activity"/>
    <property type="evidence" value="ECO:0007669"/>
    <property type="project" value="InterPro"/>
</dbReference>
<dbReference type="GO" id="GO:0036222">
    <property type="term" value="F:XTP diphosphatase activity"/>
    <property type="evidence" value="ECO:0007669"/>
    <property type="project" value="RHEA"/>
</dbReference>
<dbReference type="GO" id="GO:0009117">
    <property type="term" value="P:nucleotide metabolic process"/>
    <property type="evidence" value="ECO:0007669"/>
    <property type="project" value="UniProtKB-KW"/>
</dbReference>
<dbReference type="GO" id="GO:0009146">
    <property type="term" value="P:purine nucleoside triphosphate catabolic process"/>
    <property type="evidence" value="ECO:0007669"/>
    <property type="project" value="UniProtKB-UniRule"/>
</dbReference>
<dbReference type="CDD" id="cd00515">
    <property type="entry name" value="HAM1"/>
    <property type="match status" value="1"/>
</dbReference>
<dbReference type="FunFam" id="3.90.950.10:FF:000001">
    <property type="entry name" value="dITP/XTP pyrophosphatase"/>
    <property type="match status" value="1"/>
</dbReference>
<dbReference type="Gene3D" id="3.90.950.10">
    <property type="match status" value="1"/>
</dbReference>
<dbReference type="HAMAP" id="MF_01405">
    <property type="entry name" value="Non_canon_purine_NTPase"/>
    <property type="match status" value="1"/>
</dbReference>
<dbReference type="InterPro" id="IPR020922">
    <property type="entry name" value="dITP/XTP_pyrophosphatase"/>
</dbReference>
<dbReference type="InterPro" id="IPR029001">
    <property type="entry name" value="ITPase-like_fam"/>
</dbReference>
<dbReference type="InterPro" id="IPR002637">
    <property type="entry name" value="RdgB/HAM1"/>
</dbReference>
<dbReference type="NCBIfam" id="TIGR00042">
    <property type="entry name" value="RdgB/HAM1 family non-canonical purine NTP pyrophosphatase"/>
    <property type="match status" value="1"/>
</dbReference>
<dbReference type="PANTHER" id="PTHR11067:SF9">
    <property type="entry name" value="INOSINE TRIPHOSPHATE PYROPHOSPHATASE"/>
    <property type="match status" value="1"/>
</dbReference>
<dbReference type="PANTHER" id="PTHR11067">
    <property type="entry name" value="INOSINE TRIPHOSPHATE PYROPHOSPHATASE/HAM1 PROTEIN"/>
    <property type="match status" value="1"/>
</dbReference>
<dbReference type="Pfam" id="PF01725">
    <property type="entry name" value="Ham1p_like"/>
    <property type="match status" value="1"/>
</dbReference>
<dbReference type="SUPFAM" id="SSF52972">
    <property type="entry name" value="ITPase-like"/>
    <property type="match status" value="1"/>
</dbReference>
<comment type="function">
    <text evidence="1">Pyrophosphatase that catalyzes the hydrolysis of nucleoside triphosphates to their monophosphate derivatives, with a high preference for the non-canonical purine nucleotides XTP (xanthosine triphosphate), dITP (deoxyinosine triphosphate) and ITP. Seems to function as a house-cleaning enzyme that removes non-canonical purine nucleotides from the nucleotide pool, thus preventing their incorporation into DNA/RNA and avoiding chromosomal lesions.</text>
</comment>
<comment type="catalytic activity">
    <reaction evidence="1">
        <text>XTP + H2O = XMP + diphosphate + H(+)</text>
        <dbReference type="Rhea" id="RHEA:28610"/>
        <dbReference type="ChEBI" id="CHEBI:15377"/>
        <dbReference type="ChEBI" id="CHEBI:15378"/>
        <dbReference type="ChEBI" id="CHEBI:33019"/>
        <dbReference type="ChEBI" id="CHEBI:57464"/>
        <dbReference type="ChEBI" id="CHEBI:61314"/>
        <dbReference type="EC" id="3.6.1.66"/>
    </reaction>
</comment>
<comment type="catalytic activity">
    <reaction evidence="1">
        <text>dITP + H2O = dIMP + diphosphate + H(+)</text>
        <dbReference type="Rhea" id="RHEA:28342"/>
        <dbReference type="ChEBI" id="CHEBI:15377"/>
        <dbReference type="ChEBI" id="CHEBI:15378"/>
        <dbReference type="ChEBI" id="CHEBI:33019"/>
        <dbReference type="ChEBI" id="CHEBI:61194"/>
        <dbReference type="ChEBI" id="CHEBI:61382"/>
        <dbReference type="EC" id="3.6.1.66"/>
    </reaction>
</comment>
<comment type="catalytic activity">
    <reaction evidence="1">
        <text>ITP + H2O = IMP + diphosphate + H(+)</text>
        <dbReference type="Rhea" id="RHEA:29399"/>
        <dbReference type="ChEBI" id="CHEBI:15377"/>
        <dbReference type="ChEBI" id="CHEBI:15378"/>
        <dbReference type="ChEBI" id="CHEBI:33019"/>
        <dbReference type="ChEBI" id="CHEBI:58053"/>
        <dbReference type="ChEBI" id="CHEBI:61402"/>
        <dbReference type="EC" id="3.6.1.66"/>
    </reaction>
</comment>
<comment type="cofactor">
    <cofactor evidence="1">
        <name>Mg(2+)</name>
        <dbReference type="ChEBI" id="CHEBI:18420"/>
    </cofactor>
    <text evidence="1">Binds 1 Mg(2+) ion per subunit.</text>
</comment>
<comment type="subunit">
    <text evidence="1">Homodimer.</text>
</comment>
<comment type="similarity">
    <text evidence="1">Belongs to the HAM1 NTPase family.</text>
</comment>
<feature type="chain" id="PRO_1000184581" description="dITP/XTP pyrophosphatase">
    <location>
        <begin position="1"/>
        <end position="196"/>
    </location>
</feature>
<feature type="active site" description="Proton acceptor" evidence="1">
    <location>
        <position position="69"/>
    </location>
</feature>
<feature type="binding site" evidence="1">
    <location>
        <begin position="10"/>
        <end position="15"/>
    </location>
    <ligand>
        <name>substrate</name>
    </ligand>
</feature>
<feature type="binding site" evidence="1">
    <location>
        <position position="40"/>
    </location>
    <ligand>
        <name>Mg(2+)</name>
        <dbReference type="ChEBI" id="CHEBI:18420"/>
    </ligand>
</feature>
<feature type="binding site" evidence="1">
    <location>
        <position position="69"/>
    </location>
    <ligand>
        <name>Mg(2+)</name>
        <dbReference type="ChEBI" id="CHEBI:18420"/>
    </ligand>
</feature>
<feature type="binding site" evidence="1">
    <location>
        <position position="70"/>
    </location>
    <ligand>
        <name>substrate</name>
    </ligand>
</feature>
<feature type="binding site" evidence="1">
    <location>
        <begin position="147"/>
        <end position="150"/>
    </location>
    <ligand>
        <name>substrate</name>
    </ligand>
</feature>
<feature type="binding site" evidence="1">
    <location>
        <position position="170"/>
    </location>
    <ligand>
        <name>substrate</name>
    </ligand>
</feature>
<feature type="binding site" evidence="1">
    <location>
        <begin position="175"/>
        <end position="176"/>
    </location>
    <ligand>
        <name>substrate</name>
    </ligand>
</feature>
<protein>
    <recommendedName>
        <fullName evidence="1">dITP/XTP pyrophosphatase</fullName>
        <ecNumber evidence="1">3.6.1.66</ecNumber>
    </recommendedName>
    <alternativeName>
        <fullName evidence="1">Non-canonical purine NTP pyrophosphatase</fullName>
    </alternativeName>
    <alternativeName>
        <fullName evidence="1">Non-standard purine NTP pyrophosphatase</fullName>
    </alternativeName>
    <alternativeName>
        <fullName evidence="1">Nucleoside-triphosphate diphosphatase</fullName>
    </alternativeName>
    <alternativeName>
        <fullName evidence="1">Nucleoside-triphosphate pyrophosphatase</fullName>
        <shortName evidence="1">NTPase</shortName>
    </alternativeName>
</protein>
<proteinExistence type="inferred from homology"/>
<organism>
    <name type="scientific">Prochlorococcus marinus (strain NATL1A)</name>
    <dbReference type="NCBI Taxonomy" id="167555"/>
    <lineage>
        <taxon>Bacteria</taxon>
        <taxon>Bacillati</taxon>
        <taxon>Cyanobacteriota</taxon>
        <taxon>Cyanophyceae</taxon>
        <taxon>Synechococcales</taxon>
        <taxon>Prochlorococcaceae</taxon>
        <taxon>Prochlorococcus</taxon>
    </lineage>
</organism>
<sequence>MDNVPLVIASGNKGKIGEFKKLLDDFPIDLLTQPVGFEIEETGSTFMENARIKAIAVSQATGNLSLADDSGLSVEALGGAPGIYSSRYASSDKQRIEKLLAELKPFSNRKAKFECALCIASGEKVLIEVSGFCEGLITFFPKGQNGFGYDPIFEVSGLGETYAEMDHEKKKHIGHRGNAFKLLIPKLKQLLGSMKK</sequence>